<keyword id="KW-0378">Hydrolase</keyword>
<comment type="function">
    <text evidence="1">Catalyzes the conversion of pppGpp to ppGpp. Guanosine pentaphosphate (pppGpp) is a cytoplasmic signaling molecule which together with ppGpp controls the 'stringent response', an adaptive process that allows bacteria to respond to amino acid starvation, resulting in the coordinated regulation of numerous cellular activities.</text>
</comment>
<comment type="catalytic activity">
    <reaction evidence="1">
        <text>guanosine 3'-diphosphate 5'-triphosphate + H2O = guanosine 3',5'-bis(diphosphate) + phosphate + H(+)</text>
        <dbReference type="Rhea" id="RHEA:13073"/>
        <dbReference type="ChEBI" id="CHEBI:15377"/>
        <dbReference type="ChEBI" id="CHEBI:15378"/>
        <dbReference type="ChEBI" id="CHEBI:43474"/>
        <dbReference type="ChEBI" id="CHEBI:77828"/>
        <dbReference type="ChEBI" id="CHEBI:142410"/>
        <dbReference type="EC" id="3.6.1.40"/>
    </reaction>
</comment>
<comment type="pathway">
    <text evidence="1">Purine metabolism; ppGpp biosynthesis; ppGpp from GTP: step 2/2.</text>
</comment>
<comment type="similarity">
    <text evidence="1">Belongs to the GppA/Ppx family. GppA subfamily.</text>
</comment>
<feature type="chain" id="PRO_1000192538" description="Guanosine-5'-triphosphate,3'-diphosphate pyrophosphatase">
    <location>
        <begin position="1"/>
        <end position="493"/>
    </location>
</feature>
<sequence>MNSTSLYAAIDLGSNSFHMLVVREAAGSIQTLTRIKRKVRLAAGLNNDNHLSAEAMERGWQCLRLFAERLQDIPQPQIRVVATATLRLAVNAGEFIAKAQTILGCPVQVISGEEEARLIYQGAAHTTGGADQRLVVDIGGASTELVTGTGAQTTSLFSLSMGCVTWLERYFSDRNLAQENFDDAEKAARDVLRPVADELRFHGWKVCVGASGTVQALQEIMMAQGMDERITLAKLQQLKQRAIQCGRLEELEIEGLTLERALVFPSGLAILIAIFTELNIQSMTLAGGALREGLVYGMLHLAVDQDIRSRTLRNIQRRFIVDTDQANRVAKLADNFLKQVENAWHIEPISRELLLSACQLHEIGLSVDFKQAPYHAAYLVRHLDLPGYTPAQKKLLATLLLNQTNPVDLSSLHQQNAVPPRVAEQLCRLLRLAILFAGRRRDDLVPEITLQALNENLTLTLPGDWLAHHPLGKELIDQESQWQSYVHWPLDVR</sequence>
<organism>
    <name type="scientific">Salmonella paratyphi A (strain AKU_12601)</name>
    <dbReference type="NCBI Taxonomy" id="554290"/>
    <lineage>
        <taxon>Bacteria</taxon>
        <taxon>Pseudomonadati</taxon>
        <taxon>Pseudomonadota</taxon>
        <taxon>Gammaproteobacteria</taxon>
        <taxon>Enterobacterales</taxon>
        <taxon>Enterobacteriaceae</taxon>
        <taxon>Salmonella</taxon>
    </lineage>
</organism>
<accession>B5BIS8</accession>
<evidence type="ECO:0000255" key="1">
    <source>
        <dbReference type="HAMAP-Rule" id="MF_01550"/>
    </source>
</evidence>
<dbReference type="EC" id="3.6.1.40" evidence="1"/>
<dbReference type="EMBL" id="FM200053">
    <property type="protein sequence ID" value="CAR61776.1"/>
    <property type="molecule type" value="Genomic_DNA"/>
</dbReference>
<dbReference type="RefSeq" id="WP_001089445.1">
    <property type="nucleotide sequence ID" value="NC_011147.1"/>
</dbReference>
<dbReference type="SMR" id="B5BIS8"/>
<dbReference type="KEGG" id="sek:SSPA3499"/>
<dbReference type="HOGENOM" id="CLU_025908_4_0_6"/>
<dbReference type="UniPathway" id="UPA00908">
    <property type="reaction ID" value="UER00885"/>
</dbReference>
<dbReference type="Proteomes" id="UP000001869">
    <property type="component" value="Chromosome"/>
</dbReference>
<dbReference type="GO" id="GO:0008894">
    <property type="term" value="F:guanosine-5'-triphosphate,3'-diphosphate diphosphatase activity"/>
    <property type="evidence" value="ECO:0007669"/>
    <property type="project" value="UniProtKB-UniRule"/>
</dbReference>
<dbReference type="GO" id="GO:0015974">
    <property type="term" value="P:guanosine pentaphosphate catabolic process"/>
    <property type="evidence" value="ECO:0007669"/>
    <property type="project" value="InterPro"/>
</dbReference>
<dbReference type="GO" id="GO:0015970">
    <property type="term" value="P:guanosine tetraphosphate biosynthetic process"/>
    <property type="evidence" value="ECO:0007669"/>
    <property type="project" value="UniProtKB-UniRule"/>
</dbReference>
<dbReference type="GO" id="GO:0015949">
    <property type="term" value="P:nucleobase-containing small molecule interconversion"/>
    <property type="evidence" value="ECO:0007669"/>
    <property type="project" value="TreeGrafter"/>
</dbReference>
<dbReference type="CDD" id="cd24117">
    <property type="entry name" value="ASKHA_NBD_EcGppA-like"/>
    <property type="match status" value="1"/>
</dbReference>
<dbReference type="FunFam" id="1.10.3210.10:FF:000004">
    <property type="entry name" value="Guanosine-5'-triphosphate,3'-diphosphate pyrophosphatase"/>
    <property type="match status" value="1"/>
</dbReference>
<dbReference type="FunFam" id="3.30.420.150:FF:000001">
    <property type="entry name" value="Guanosine-5'-triphosphate,3'-diphosphate pyrophosphatase"/>
    <property type="match status" value="1"/>
</dbReference>
<dbReference type="FunFam" id="3.30.420.40:FF:000023">
    <property type="entry name" value="Guanosine-5'-triphosphate,3'-diphosphate pyrophosphatase"/>
    <property type="match status" value="1"/>
</dbReference>
<dbReference type="Gene3D" id="3.30.420.40">
    <property type="match status" value="1"/>
</dbReference>
<dbReference type="Gene3D" id="3.30.420.150">
    <property type="entry name" value="Exopolyphosphatase. Domain 2"/>
    <property type="match status" value="1"/>
</dbReference>
<dbReference type="Gene3D" id="1.10.3210.10">
    <property type="entry name" value="Hypothetical protein af1432"/>
    <property type="match status" value="1"/>
</dbReference>
<dbReference type="HAMAP" id="MF_01550">
    <property type="entry name" value="GppA"/>
    <property type="match status" value="1"/>
</dbReference>
<dbReference type="InterPro" id="IPR043129">
    <property type="entry name" value="ATPase_NBD"/>
</dbReference>
<dbReference type="InterPro" id="IPR050273">
    <property type="entry name" value="GppA/Ppx_hydrolase"/>
</dbReference>
<dbReference type="InterPro" id="IPR023709">
    <property type="entry name" value="Guo-5TP_3DP_PyrP"/>
</dbReference>
<dbReference type="InterPro" id="IPR048950">
    <property type="entry name" value="Ppx_GppA_C"/>
</dbReference>
<dbReference type="InterPro" id="IPR003695">
    <property type="entry name" value="Ppx_GppA_N"/>
</dbReference>
<dbReference type="InterPro" id="IPR030673">
    <property type="entry name" value="PyroPPase_GppA_Ppx"/>
</dbReference>
<dbReference type="NCBIfam" id="NF008260">
    <property type="entry name" value="PRK11031.1"/>
    <property type="match status" value="1"/>
</dbReference>
<dbReference type="PANTHER" id="PTHR30005">
    <property type="entry name" value="EXOPOLYPHOSPHATASE"/>
    <property type="match status" value="1"/>
</dbReference>
<dbReference type="PANTHER" id="PTHR30005:SF0">
    <property type="entry name" value="RETROGRADE REGULATION PROTEIN 2"/>
    <property type="match status" value="1"/>
</dbReference>
<dbReference type="Pfam" id="PF02541">
    <property type="entry name" value="Ppx-GppA"/>
    <property type="match status" value="1"/>
</dbReference>
<dbReference type="Pfam" id="PF21447">
    <property type="entry name" value="Ppx-GppA_III"/>
    <property type="match status" value="1"/>
</dbReference>
<dbReference type="PIRSF" id="PIRSF001267">
    <property type="entry name" value="Pyrophosphatase_GppA_Ppx"/>
    <property type="match status" value="1"/>
</dbReference>
<dbReference type="SUPFAM" id="SSF53067">
    <property type="entry name" value="Actin-like ATPase domain"/>
    <property type="match status" value="2"/>
</dbReference>
<dbReference type="SUPFAM" id="SSF109604">
    <property type="entry name" value="HD-domain/PDEase-like"/>
    <property type="match status" value="1"/>
</dbReference>
<name>GPPA_SALPK</name>
<proteinExistence type="inferred from homology"/>
<reference key="1">
    <citation type="journal article" date="2009" name="BMC Genomics">
        <title>Pseudogene accumulation in the evolutionary histories of Salmonella enterica serovars Paratyphi A and Typhi.</title>
        <authorList>
            <person name="Holt K.E."/>
            <person name="Thomson N.R."/>
            <person name="Wain J."/>
            <person name="Langridge G.C."/>
            <person name="Hasan R."/>
            <person name="Bhutta Z.A."/>
            <person name="Quail M.A."/>
            <person name="Norbertczak H."/>
            <person name="Walker D."/>
            <person name="Simmonds M."/>
            <person name="White B."/>
            <person name="Bason N."/>
            <person name="Mungall K."/>
            <person name="Dougan G."/>
            <person name="Parkhill J."/>
        </authorList>
    </citation>
    <scope>NUCLEOTIDE SEQUENCE [LARGE SCALE GENOMIC DNA]</scope>
    <source>
        <strain>AKU_12601</strain>
    </source>
</reference>
<protein>
    <recommendedName>
        <fullName evidence="1">Guanosine-5'-triphosphate,3'-diphosphate pyrophosphatase</fullName>
        <ecNumber evidence="1">3.6.1.40</ecNumber>
    </recommendedName>
    <alternativeName>
        <fullName evidence="1">Guanosine pentaphosphate phosphohydrolase</fullName>
    </alternativeName>
    <alternativeName>
        <fullName evidence="1">pppGpp-5'-phosphohydrolase</fullName>
    </alternativeName>
</protein>
<gene>
    <name evidence="1" type="primary">gppA</name>
    <name type="ordered locus">SSPA3499</name>
</gene>